<sequence>MSESGHSQPGLYGIERRRRWKEPGSSGPQNLSGPGGRERDYIAPWERERRDGSEDPSTNVMQKTPIILSKPPAERSKQPPPSTAPAAPPAPAPLEKPIVLMKPREEGKGPVAATGASTPEGTAPPPPTAPAPPKGEKEGQRPTQPVYQIQNRGMGTAAPTAMDPVVGQAKLLPPERMKHSIKLVDDQMNWCDSAIEYLLDQTDVLVVGVLGLQGTGKSMVMSLLSANTPEEDQRAYVFRAQSAEMKERGGNQTSGIDFFITQERIVFLDTQPILSPSILDHLINNDRKLPPEYNLPHTYVEMQSLQIAAFLFTVCHVVIVVQDWFTDLSLYRFLQTAEMVKPSTPSPSHESSSAAGSDEGTEYYPHLVFLQNKARREDFCPRKLRQMHLMIDQLMAHSHLRYKGTLSMLQCNIFPGLPPDFLDAEVNLFLVPFMDSEAENENPPRAGPGSSPLFSLLPGYRGHPSFQSLVSKLRSQVMSMARPQLSHTILTEKNWFHYAARIWDGVKKSSALAEYSRLLA</sequence>
<reference key="1">
    <citation type="journal article" date="2004" name="Genome Res.">
        <title>The status, quality, and expansion of the NIH full-length cDNA project: the Mammalian Gene Collection (MGC).</title>
        <authorList>
            <consortium name="The MGC Project Team"/>
        </authorList>
    </citation>
    <scope>NUCLEOTIDE SEQUENCE [LARGE SCALE MRNA]</scope>
    <source>
        <tissue>Testis</tissue>
    </source>
</reference>
<reference key="2">
    <citation type="journal article" date="2012" name="Nat. Commun.">
        <title>Quantitative maps of protein phosphorylation sites across 14 different rat organs and tissues.</title>
        <authorList>
            <person name="Lundby A."/>
            <person name="Secher A."/>
            <person name="Lage K."/>
            <person name="Nordsborg N.B."/>
            <person name="Dmytriyev A."/>
            <person name="Lundby C."/>
            <person name="Olsen J.V."/>
        </authorList>
    </citation>
    <scope>PHOSPHORYLATION [LARGE SCALE ANALYSIS] AT SER-4; SER-7 AND SER-32</scope>
    <scope>IDENTIFICATION BY MASS SPECTROMETRY [LARGE SCALE ANALYSIS]</scope>
</reference>
<comment type="function">
    <text evidence="1 2">Involved in nonsense-mediated decay (NMD) of mRNAs containing premature stop codons. Is recruited by release factors to stalled ribosomes together with SMG1 and SMG8 (forming the SMG1C protein kinase complex) and, in the SMG1C complex, is required for the efficient association between SMG1 and SMG8 (By similarity). Plays a role in brain, heart, and eye development.</text>
</comment>
<comment type="subunit">
    <text evidence="2">Self-associates to form homodimers and forms heterodimers with SMG8; these assembly forms may represent SMG1C intermediate forms (By similarity). Component of the SMG1C complex composed of SMG1, SMG8 and SMG9 (By similarity). Interacts with DHX34; the interaction is RNA-independent (By similarity).</text>
</comment>
<comment type="PTM">
    <text evidence="2">Phosphorylated by SMG1.</text>
</comment>
<comment type="similarity">
    <text evidence="4">Belongs to the SMG9 family.</text>
</comment>
<name>SMG9_RAT</name>
<accession>Q5PQS6</accession>
<feature type="initiator methionine" description="Removed" evidence="2">
    <location>
        <position position="1"/>
    </location>
</feature>
<feature type="chain" id="PRO_0000289165" description="Nonsense-mediated mRNA decay factor SMG9">
    <location>
        <begin position="2"/>
        <end position="520"/>
    </location>
</feature>
<feature type="region of interest" description="Disordered" evidence="3">
    <location>
        <begin position="1"/>
        <end position="94"/>
    </location>
</feature>
<feature type="region of interest" description="Disordered" evidence="3">
    <location>
        <begin position="107"/>
        <end position="143"/>
    </location>
</feature>
<feature type="compositionally biased region" description="Basic and acidic residues" evidence="3">
    <location>
        <begin position="36"/>
        <end position="53"/>
    </location>
</feature>
<feature type="compositionally biased region" description="Pro residues" evidence="3">
    <location>
        <begin position="78"/>
        <end position="94"/>
    </location>
</feature>
<feature type="compositionally biased region" description="Low complexity" evidence="3">
    <location>
        <begin position="112"/>
        <end position="121"/>
    </location>
</feature>
<feature type="compositionally biased region" description="Pro residues" evidence="3">
    <location>
        <begin position="122"/>
        <end position="133"/>
    </location>
</feature>
<feature type="modified residue" description="N-acetylserine" evidence="2">
    <location>
        <position position="2"/>
    </location>
</feature>
<feature type="modified residue" description="Phosphoserine" evidence="2">
    <location>
        <position position="2"/>
    </location>
</feature>
<feature type="modified residue" description="Phosphoserine" evidence="6">
    <location>
        <position position="4"/>
    </location>
</feature>
<feature type="modified residue" description="Phosphoserine" evidence="6">
    <location>
        <position position="7"/>
    </location>
</feature>
<feature type="modified residue" description="Phosphoserine" evidence="6">
    <location>
        <position position="32"/>
    </location>
</feature>
<feature type="modified residue" description="Phosphoserine" evidence="2">
    <location>
        <position position="53"/>
    </location>
</feature>
<feature type="modified residue" description="Phosphoserine" evidence="2">
    <location>
        <position position="451"/>
    </location>
</feature>
<organism>
    <name type="scientific">Rattus norvegicus</name>
    <name type="common">Rat</name>
    <dbReference type="NCBI Taxonomy" id="10116"/>
    <lineage>
        <taxon>Eukaryota</taxon>
        <taxon>Metazoa</taxon>
        <taxon>Chordata</taxon>
        <taxon>Craniata</taxon>
        <taxon>Vertebrata</taxon>
        <taxon>Euteleostomi</taxon>
        <taxon>Mammalia</taxon>
        <taxon>Eutheria</taxon>
        <taxon>Euarchontoglires</taxon>
        <taxon>Glires</taxon>
        <taxon>Rodentia</taxon>
        <taxon>Myomorpha</taxon>
        <taxon>Muroidea</taxon>
        <taxon>Muridae</taxon>
        <taxon>Murinae</taxon>
        <taxon>Rattus</taxon>
    </lineage>
</organism>
<protein>
    <recommendedName>
        <fullName evidence="5">Nonsense-mediated mRNA decay factor SMG9</fullName>
    </recommendedName>
</protein>
<dbReference type="EMBL" id="BC087051">
    <property type="protein sequence ID" value="AAH87051.1"/>
    <property type="molecule type" value="mRNA"/>
</dbReference>
<dbReference type="RefSeq" id="NP_001014265.1">
    <property type="nucleotide sequence ID" value="NM_001014243.1"/>
</dbReference>
<dbReference type="RefSeq" id="XP_006228512.1">
    <property type="nucleotide sequence ID" value="XM_006228450.5"/>
</dbReference>
<dbReference type="SMR" id="Q5PQS6"/>
<dbReference type="FunCoup" id="Q5PQS6">
    <property type="interactions" value="2173"/>
</dbReference>
<dbReference type="STRING" id="10116.ENSRNOP00000026669"/>
<dbReference type="GlyGen" id="Q5PQS6">
    <property type="glycosylation" value="1 site"/>
</dbReference>
<dbReference type="iPTMnet" id="Q5PQS6"/>
<dbReference type="PhosphoSitePlus" id="Q5PQS6"/>
<dbReference type="PaxDb" id="10116-ENSRNOP00000026669"/>
<dbReference type="GeneID" id="365215"/>
<dbReference type="KEGG" id="rno:365215"/>
<dbReference type="UCSC" id="RGD:1309888">
    <property type="organism name" value="rat"/>
</dbReference>
<dbReference type="AGR" id="RGD:1309888"/>
<dbReference type="CTD" id="56006"/>
<dbReference type="RGD" id="1309888">
    <property type="gene designation" value="Smg9"/>
</dbReference>
<dbReference type="VEuPathDB" id="HostDB:ENSRNOG00000019596"/>
<dbReference type="eggNOG" id="KOG4181">
    <property type="taxonomic scope" value="Eukaryota"/>
</dbReference>
<dbReference type="HOGENOM" id="CLU_037795_0_0_1"/>
<dbReference type="InParanoid" id="Q5PQS6"/>
<dbReference type="OrthoDB" id="61574at9989"/>
<dbReference type="PhylomeDB" id="Q5PQS6"/>
<dbReference type="Reactome" id="R-RNO-975957">
    <property type="pathway name" value="Nonsense Mediated Decay (NMD) enhanced by the Exon Junction Complex (EJC)"/>
</dbReference>
<dbReference type="PRO" id="PR:Q5PQS6"/>
<dbReference type="Proteomes" id="UP000002494">
    <property type="component" value="Chromosome 1"/>
</dbReference>
<dbReference type="Bgee" id="ENSRNOG00000019596">
    <property type="expression patterns" value="Expressed in testis and 20 other cell types or tissues"/>
</dbReference>
<dbReference type="GO" id="GO:0042802">
    <property type="term" value="F:identical protein binding"/>
    <property type="evidence" value="ECO:0000266"/>
    <property type="project" value="RGD"/>
</dbReference>
<dbReference type="GO" id="GO:0007420">
    <property type="term" value="P:brain development"/>
    <property type="evidence" value="ECO:0000250"/>
    <property type="project" value="UniProtKB"/>
</dbReference>
<dbReference type="GO" id="GO:0001654">
    <property type="term" value="P:eye development"/>
    <property type="evidence" value="ECO:0000250"/>
    <property type="project" value="UniProtKB"/>
</dbReference>
<dbReference type="GO" id="GO:0007507">
    <property type="term" value="P:heart development"/>
    <property type="evidence" value="ECO:0000250"/>
    <property type="project" value="UniProtKB"/>
</dbReference>
<dbReference type="GO" id="GO:0001701">
    <property type="term" value="P:in utero embryonic development"/>
    <property type="evidence" value="ECO:0000266"/>
    <property type="project" value="RGD"/>
</dbReference>
<dbReference type="GO" id="GO:0043066">
    <property type="term" value="P:negative regulation of apoptotic process"/>
    <property type="evidence" value="ECO:0000266"/>
    <property type="project" value="RGD"/>
</dbReference>
<dbReference type="GO" id="GO:0000184">
    <property type="term" value="P:nuclear-transcribed mRNA catabolic process, nonsense-mediated decay"/>
    <property type="evidence" value="ECO:0000250"/>
    <property type="project" value="UniProtKB"/>
</dbReference>
<dbReference type="FunFam" id="3.40.50.300:FF:001272">
    <property type="entry name" value="SMG9 isoform 2"/>
    <property type="match status" value="1"/>
</dbReference>
<dbReference type="Gene3D" id="3.40.50.300">
    <property type="entry name" value="P-loop containing nucleotide triphosphate hydrolases"/>
    <property type="match status" value="1"/>
</dbReference>
<dbReference type="InterPro" id="IPR027417">
    <property type="entry name" value="P-loop_NTPase"/>
</dbReference>
<dbReference type="InterPro" id="IPR039177">
    <property type="entry name" value="SMG9"/>
</dbReference>
<dbReference type="PANTHER" id="PTHR14270">
    <property type="entry name" value="NONSENSE-MEDIATED MRNA DECAY FACTOR SMG9"/>
    <property type="match status" value="1"/>
</dbReference>
<dbReference type="PANTHER" id="PTHR14270:SF0">
    <property type="entry name" value="NONSENSE-MEDIATED MRNA DECAY FACTOR SMG9"/>
    <property type="match status" value="1"/>
</dbReference>
<proteinExistence type="evidence at protein level"/>
<gene>
    <name evidence="5" type="primary">Smg9</name>
</gene>
<evidence type="ECO:0000250" key="1">
    <source>
        <dbReference type="UniProtKB" id="Q9DB90"/>
    </source>
</evidence>
<evidence type="ECO:0000250" key="2">
    <source>
        <dbReference type="UniProtKB" id="Q9H0W8"/>
    </source>
</evidence>
<evidence type="ECO:0000256" key="3">
    <source>
        <dbReference type="SAM" id="MobiDB-lite"/>
    </source>
</evidence>
<evidence type="ECO:0000305" key="4"/>
<evidence type="ECO:0000312" key="5">
    <source>
        <dbReference type="RGD" id="1309888"/>
    </source>
</evidence>
<evidence type="ECO:0007744" key="6">
    <source>
    </source>
</evidence>
<keyword id="KW-0007">Acetylation</keyword>
<keyword id="KW-0866">Nonsense-mediated mRNA decay</keyword>
<keyword id="KW-0597">Phosphoprotein</keyword>
<keyword id="KW-1185">Reference proteome</keyword>